<feature type="chain" id="PRO_0000232938" description="Protein KES1">
    <location>
        <begin position="1"/>
        <end position="383"/>
    </location>
</feature>
<feature type="region of interest" description="Disordered" evidence="2">
    <location>
        <begin position="317"/>
        <end position="346"/>
    </location>
</feature>
<feature type="compositionally biased region" description="Basic and acidic residues" evidence="2">
    <location>
        <begin position="317"/>
        <end position="339"/>
    </location>
</feature>
<accession>P0C199</accession>
<accession>A0A0D1CP29</accession>
<accession>Q4P8S3</accession>
<proteinExistence type="inferred from homology"/>
<gene>
    <name type="primary">KES1</name>
    <name type="ORF">UMAG_11086</name>
</gene>
<evidence type="ECO:0000250" key="1">
    <source>
        <dbReference type="UniProtKB" id="P35844"/>
    </source>
</evidence>
<evidence type="ECO:0000256" key="2">
    <source>
        <dbReference type="SAM" id="MobiDB-lite"/>
    </source>
</evidence>
<evidence type="ECO:0000305" key="3"/>
<sequence>MGEEDIGEAVPKEQRQGWGQFLKQIATFSGDLSSLTAPSFILSPVSLVEFPAYWGEHPDEFAKISTGKDEIERMNLVLKWFIGTLKGQFTARNTSMGSEKKPLNPILGELFLGKWPDKNDRGETTLTAEQVSHHPPVTAYHIENRKAGVTLEGHCAQKTSFSGRTIQVKQVGHAILRVKLAGSDKEELYLITLPNLLIEGLWYGAPYVELTGNSYIQSTTCLLTTLSYTGKGYFSGKAHSFKATIGAGGNALYTVEGEWAGVSKYKGKSVSGGSNELFWDASTQREEVSVEAVEQQGEMESRKVWKTVAHGIRSGDFETASKDKARIENAQRQKRKDEAAAGTPHQLERFVHLDNDQEYSQLAAMFKGQPATEDGYRSKPRVH</sequence>
<reference key="1">
    <citation type="journal article" date="2006" name="Nature">
        <title>Insights from the genome of the biotrophic fungal plant pathogen Ustilago maydis.</title>
        <authorList>
            <person name="Kaemper J."/>
            <person name="Kahmann R."/>
            <person name="Boelker M."/>
            <person name="Ma L.-J."/>
            <person name="Brefort T."/>
            <person name="Saville B.J."/>
            <person name="Banuett F."/>
            <person name="Kronstad J.W."/>
            <person name="Gold S.E."/>
            <person name="Mueller O."/>
            <person name="Perlin M.H."/>
            <person name="Woesten H.A.B."/>
            <person name="de Vries R."/>
            <person name="Ruiz-Herrera J."/>
            <person name="Reynaga-Pena C.G."/>
            <person name="Snetselaar K."/>
            <person name="McCann M."/>
            <person name="Perez-Martin J."/>
            <person name="Feldbruegge M."/>
            <person name="Basse C.W."/>
            <person name="Steinberg G."/>
            <person name="Ibeas J.I."/>
            <person name="Holloman W."/>
            <person name="Guzman P."/>
            <person name="Farman M.L."/>
            <person name="Stajich J.E."/>
            <person name="Sentandreu R."/>
            <person name="Gonzalez-Prieto J.M."/>
            <person name="Kennell J.C."/>
            <person name="Molina L."/>
            <person name="Schirawski J."/>
            <person name="Mendoza-Mendoza A."/>
            <person name="Greilinger D."/>
            <person name="Muench K."/>
            <person name="Roessel N."/>
            <person name="Scherer M."/>
            <person name="Vranes M."/>
            <person name="Ladendorf O."/>
            <person name="Vincon V."/>
            <person name="Fuchs U."/>
            <person name="Sandrock B."/>
            <person name="Meng S."/>
            <person name="Ho E.C.H."/>
            <person name="Cahill M.J."/>
            <person name="Boyce K.J."/>
            <person name="Klose J."/>
            <person name="Klosterman S.J."/>
            <person name="Deelstra H.J."/>
            <person name="Ortiz-Castellanos L."/>
            <person name="Li W."/>
            <person name="Sanchez-Alonso P."/>
            <person name="Schreier P.H."/>
            <person name="Haeuser-Hahn I."/>
            <person name="Vaupel M."/>
            <person name="Koopmann E."/>
            <person name="Friedrich G."/>
            <person name="Voss H."/>
            <person name="Schlueter T."/>
            <person name="Margolis J."/>
            <person name="Platt D."/>
            <person name="Swimmer C."/>
            <person name="Gnirke A."/>
            <person name="Chen F."/>
            <person name="Vysotskaia V."/>
            <person name="Mannhaupt G."/>
            <person name="Gueldener U."/>
            <person name="Muensterkoetter M."/>
            <person name="Haase D."/>
            <person name="Oesterheld M."/>
            <person name="Mewes H.-W."/>
            <person name="Mauceli E.W."/>
            <person name="DeCaprio D."/>
            <person name="Wade C.M."/>
            <person name="Butler J."/>
            <person name="Young S.K."/>
            <person name="Jaffe D.B."/>
            <person name="Calvo S.E."/>
            <person name="Nusbaum C."/>
            <person name="Galagan J.E."/>
            <person name="Birren B.W."/>
        </authorList>
    </citation>
    <scope>NUCLEOTIDE SEQUENCE [LARGE SCALE GENOMIC DNA]</scope>
    <source>
        <strain>DSM 14603 / FGSC 9021 / UM521</strain>
    </source>
</reference>
<reference key="2">
    <citation type="submission" date="2014-09" db="EMBL/GenBank/DDBJ databases">
        <authorList>
            <person name="Gueldener U."/>
            <person name="Muensterkoetter M."/>
            <person name="Walter M.C."/>
            <person name="Mannhaupt G."/>
            <person name="Kahmann R."/>
        </authorList>
    </citation>
    <scope>GENOME REANNOTATION</scope>
    <source>
        <strain>DSM 14603 / FGSC 9021 / UM521</strain>
    </source>
</reference>
<name>KES1_MYCMD</name>
<comment type="function">
    <text evidence="1">Lipid transporter involved in lipid countertransport between the Golgi complex and membranes of the endoplasmic reticulum: specifically exchanges sterol with phosphatidylinositol 4-phosphate (PI4P), delivering sterol to the Golgi in exchange for PI4P, which is degraded by the SAC1 phosphatase in the endoplasmic reticulum.</text>
</comment>
<comment type="similarity">
    <text evidence="3">Belongs to the OSBP family.</text>
</comment>
<keyword id="KW-0445">Lipid transport</keyword>
<keyword id="KW-0446">Lipid-binding</keyword>
<keyword id="KW-1185">Reference proteome</keyword>
<keyword id="KW-0813">Transport</keyword>
<protein>
    <recommendedName>
        <fullName>Protein KES1</fullName>
    </recommendedName>
</protein>
<dbReference type="EMBL" id="CM003148">
    <property type="protein sequence ID" value="KIS68398.1"/>
    <property type="molecule type" value="Genomic_DNA"/>
</dbReference>
<dbReference type="RefSeq" id="XP_011390093.1">
    <property type="nucleotide sequence ID" value="XM_011391791.1"/>
</dbReference>
<dbReference type="SMR" id="P0C199"/>
<dbReference type="FunCoup" id="P0C199">
    <property type="interactions" value="51"/>
</dbReference>
<dbReference type="STRING" id="237631.P0C199"/>
<dbReference type="EnsemblFungi" id="KIS68398">
    <property type="protein sequence ID" value="KIS68398"/>
    <property type="gene ID" value="UMAG_11086"/>
</dbReference>
<dbReference type="GeneID" id="23567015"/>
<dbReference type="KEGG" id="uma:UMAG_11086"/>
<dbReference type="VEuPathDB" id="FungiDB:UMAG_11086"/>
<dbReference type="InParanoid" id="P0C199"/>
<dbReference type="OrthoDB" id="14833at2759"/>
<dbReference type="Proteomes" id="UP000000561">
    <property type="component" value="Chromosome 9"/>
</dbReference>
<dbReference type="GO" id="GO:0005829">
    <property type="term" value="C:cytosol"/>
    <property type="evidence" value="ECO:0000318"/>
    <property type="project" value="GO_Central"/>
</dbReference>
<dbReference type="GO" id="GO:0016020">
    <property type="term" value="C:membrane"/>
    <property type="evidence" value="ECO:0000318"/>
    <property type="project" value="GO_Central"/>
</dbReference>
<dbReference type="GO" id="GO:0008142">
    <property type="term" value="F:oxysterol binding"/>
    <property type="evidence" value="ECO:0000318"/>
    <property type="project" value="GO_Central"/>
</dbReference>
<dbReference type="GO" id="GO:0006869">
    <property type="term" value="P:lipid transport"/>
    <property type="evidence" value="ECO:0007669"/>
    <property type="project" value="UniProtKB-KW"/>
</dbReference>
<dbReference type="FunFam" id="2.40.160.120:FF:000010">
    <property type="entry name" value="Oxysterol-binding protein homolog 4"/>
    <property type="match status" value="1"/>
</dbReference>
<dbReference type="FunFam" id="1.10.287.2720:FF:000004">
    <property type="entry name" value="Unplaced genomic scaffold supercont1.15, whole genome shotgun sequence"/>
    <property type="match status" value="1"/>
</dbReference>
<dbReference type="Gene3D" id="1.10.287.2720">
    <property type="match status" value="1"/>
</dbReference>
<dbReference type="Gene3D" id="2.40.160.120">
    <property type="match status" value="1"/>
</dbReference>
<dbReference type="Gene3D" id="3.30.70.3490">
    <property type="match status" value="1"/>
</dbReference>
<dbReference type="Gene3D" id="6.10.250.1430">
    <property type="match status" value="1"/>
</dbReference>
<dbReference type="InterPro" id="IPR037239">
    <property type="entry name" value="OSBP_sf"/>
</dbReference>
<dbReference type="InterPro" id="IPR000648">
    <property type="entry name" value="Oxysterol-bd"/>
</dbReference>
<dbReference type="InterPro" id="IPR018494">
    <property type="entry name" value="Oxysterol-bd_CS"/>
</dbReference>
<dbReference type="PANTHER" id="PTHR10972:SF184">
    <property type="entry name" value="OXYSTEROL-BINDING PROTEIN HOMOLOG 4-RELATED"/>
    <property type="match status" value="1"/>
</dbReference>
<dbReference type="PANTHER" id="PTHR10972">
    <property type="entry name" value="OXYSTEROL-BINDING PROTEIN-RELATED"/>
    <property type="match status" value="1"/>
</dbReference>
<dbReference type="Pfam" id="PF01237">
    <property type="entry name" value="Oxysterol_BP"/>
    <property type="match status" value="1"/>
</dbReference>
<dbReference type="SUPFAM" id="SSF144000">
    <property type="entry name" value="Oxysterol-binding protein-like"/>
    <property type="match status" value="1"/>
</dbReference>
<dbReference type="PROSITE" id="PS01013">
    <property type="entry name" value="OSBP"/>
    <property type="match status" value="1"/>
</dbReference>
<organism>
    <name type="scientific">Mycosarcoma maydis</name>
    <name type="common">Corn smut fungus</name>
    <name type="synonym">Ustilago maydis</name>
    <dbReference type="NCBI Taxonomy" id="5270"/>
    <lineage>
        <taxon>Eukaryota</taxon>
        <taxon>Fungi</taxon>
        <taxon>Dikarya</taxon>
        <taxon>Basidiomycota</taxon>
        <taxon>Ustilaginomycotina</taxon>
        <taxon>Ustilaginomycetes</taxon>
        <taxon>Ustilaginales</taxon>
        <taxon>Ustilaginaceae</taxon>
        <taxon>Mycosarcoma</taxon>
    </lineage>
</organism>